<protein>
    <recommendedName>
        <fullName>Peroxisomal membrane protein PEX29</fullName>
    </recommendedName>
    <alternativeName>
        <fullName>Peroxin-29</fullName>
    </alternativeName>
</protein>
<reference key="1">
    <citation type="journal article" date="1997" name="Nature">
        <title>The nucleotide sequence of Saccharomyces cerevisiae chromosome IV.</title>
        <authorList>
            <person name="Jacq C."/>
            <person name="Alt-Moerbe J."/>
            <person name="Andre B."/>
            <person name="Arnold W."/>
            <person name="Bahr A."/>
            <person name="Ballesta J.P.G."/>
            <person name="Bargues M."/>
            <person name="Baron L."/>
            <person name="Becker A."/>
            <person name="Biteau N."/>
            <person name="Bloecker H."/>
            <person name="Blugeon C."/>
            <person name="Boskovic J."/>
            <person name="Brandt P."/>
            <person name="Brueckner M."/>
            <person name="Buitrago M.J."/>
            <person name="Coster F."/>
            <person name="Delaveau T."/>
            <person name="del Rey F."/>
            <person name="Dujon B."/>
            <person name="Eide L.G."/>
            <person name="Garcia-Cantalejo J.M."/>
            <person name="Goffeau A."/>
            <person name="Gomez-Peris A."/>
            <person name="Granotier C."/>
            <person name="Hanemann V."/>
            <person name="Hankeln T."/>
            <person name="Hoheisel J.D."/>
            <person name="Jaeger W."/>
            <person name="Jimenez A."/>
            <person name="Jonniaux J.-L."/>
            <person name="Kraemer C."/>
            <person name="Kuester H."/>
            <person name="Laamanen P."/>
            <person name="Legros Y."/>
            <person name="Louis E.J."/>
            <person name="Moeller-Rieker S."/>
            <person name="Monnet A."/>
            <person name="Moro M."/>
            <person name="Mueller-Auer S."/>
            <person name="Nussbaumer B."/>
            <person name="Paricio N."/>
            <person name="Paulin L."/>
            <person name="Perea J."/>
            <person name="Perez-Alonso M."/>
            <person name="Perez-Ortin J.E."/>
            <person name="Pohl T.M."/>
            <person name="Prydz H."/>
            <person name="Purnelle B."/>
            <person name="Rasmussen S.W."/>
            <person name="Remacha M.A."/>
            <person name="Revuelta J.L."/>
            <person name="Rieger M."/>
            <person name="Salom D."/>
            <person name="Saluz H.P."/>
            <person name="Saiz J.E."/>
            <person name="Saren A.-M."/>
            <person name="Schaefer M."/>
            <person name="Scharfe M."/>
            <person name="Schmidt E.R."/>
            <person name="Schneider C."/>
            <person name="Scholler P."/>
            <person name="Schwarz S."/>
            <person name="Soler-Mira A."/>
            <person name="Urrestarazu L.A."/>
            <person name="Verhasselt P."/>
            <person name="Vissers S."/>
            <person name="Voet M."/>
            <person name="Volckaert G."/>
            <person name="Wagner G."/>
            <person name="Wambutt R."/>
            <person name="Wedler E."/>
            <person name="Wedler H."/>
            <person name="Woelfl S."/>
            <person name="Harris D.E."/>
            <person name="Bowman S."/>
            <person name="Brown D."/>
            <person name="Churcher C.M."/>
            <person name="Connor R."/>
            <person name="Dedman K."/>
            <person name="Gentles S."/>
            <person name="Hamlin N."/>
            <person name="Hunt S."/>
            <person name="Jones L."/>
            <person name="McDonald S."/>
            <person name="Murphy L.D."/>
            <person name="Niblett D."/>
            <person name="Odell C."/>
            <person name="Oliver K."/>
            <person name="Rajandream M.A."/>
            <person name="Richards C."/>
            <person name="Shore L."/>
            <person name="Walsh S.V."/>
            <person name="Barrell B.G."/>
            <person name="Dietrich F.S."/>
            <person name="Mulligan J.T."/>
            <person name="Allen E."/>
            <person name="Araujo R."/>
            <person name="Aviles E."/>
            <person name="Berno A."/>
            <person name="Carpenter J."/>
            <person name="Chen E."/>
            <person name="Cherry J.M."/>
            <person name="Chung E."/>
            <person name="Duncan M."/>
            <person name="Hunicke-Smith S."/>
            <person name="Hyman R.W."/>
            <person name="Komp C."/>
            <person name="Lashkari D."/>
            <person name="Lew H."/>
            <person name="Lin D."/>
            <person name="Mosedale D."/>
            <person name="Nakahara K."/>
            <person name="Namath A."/>
            <person name="Oefner P."/>
            <person name="Oh C."/>
            <person name="Petel F.X."/>
            <person name="Roberts D."/>
            <person name="Schramm S."/>
            <person name="Schroeder M."/>
            <person name="Shogren T."/>
            <person name="Shroff N."/>
            <person name="Winant A."/>
            <person name="Yelton M.A."/>
            <person name="Botstein D."/>
            <person name="Davis R.W."/>
            <person name="Johnston M."/>
            <person name="Andrews S."/>
            <person name="Brinkman R."/>
            <person name="Cooper J."/>
            <person name="Ding H."/>
            <person name="Du Z."/>
            <person name="Favello A."/>
            <person name="Fulton L."/>
            <person name="Gattung S."/>
            <person name="Greco T."/>
            <person name="Hallsworth K."/>
            <person name="Hawkins J."/>
            <person name="Hillier L.W."/>
            <person name="Jier M."/>
            <person name="Johnson D."/>
            <person name="Johnston L."/>
            <person name="Kirsten J."/>
            <person name="Kucaba T."/>
            <person name="Langston Y."/>
            <person name="Latreille P."/>
            <person name="Le T."/>
            <person name="Mardis E."/>
            <person name="Menezes S."/>
            <person name="Miller N."/>
            <person name="Nhan M."/>
            <person name="Pauley A."/>
            <person name="Peluso D."/>
            <person name="Rifkin L."/>
            <person name="Riles L."/>
            <person name="Taich A."/>
            <person name="Trevaskis E."/>
            <person name="Vignati D."/>
            <person name="Wilcox L."/>
            <person name="Wohldman P."/>
            <person name="Vaudin M."/>
            <person name="Wilson R."/>
            <person name="Waterston R."/>
            <person name="Albermann K."/>
            <person name="Hani J."/>
            <person name="Heumann K."/>
            <person name="Kleine K."/>
            <person name="Mewes H.-W."/>
            <person name="Zollner A."/>
            <person name="Zaccaria P."/>
        </authorList>
    </citation>
    <scope>NUCLEOTIDE SEQUENCE [LARGE SCALE GENOMIC DNA]</scope>
    <source>
        <strain>ATCC 204508 / S288c</strain>
    </source>
</reference>
<reference key="2">
    <citation type="journal article" date="2014" name="G3 (Bethesda)">
        <title>The reference genome sequence of Saccharomyces cerevisiae: Then and now.</title>
        <authorList>
            <person name="Engel S.R."/>
            <person name="Dietrich F.S."/>
            <person name="Fisk D.G."/>
            <person name="Binkley G."/>
            <person name="Balakrishnan R."/>
            <person name="Costanzo M.C."/>
            <person name="Dwight S.S."/>
            <person name="Hitz B.C."/>
            <person name="Karra K."/>
            <person name="Nash R.S."/>
            <person name="Weng S."/>
            <person name="Wong E.D."/>
            <person name="Lloyd P."/>
            <person name="Skrzypek M.S."/>
            <person name="Miyasato S.R."/>
            <person name="Simison M."/>
            <person name="Cherry J.M."/>
        </authorList>
    </citation>
    <scope>GENOME REANNOTATION</scope>
    <source>
        <strain>ATCC 204508 / S288c</strain>
    </source>
</reference>
<reference key="3">
    <citation type="journal article" date="2003" name="J. Cell Biol.">
        <title>YHR150w and YDR479c encode peroxisomal integral membrane proteins involved in the regulation of peroxisome number, size, and distribution in Saccharomyces cerevisiae.</title>
        <authorList>
            <person name="Vizeacoumar F.J."/>
            <person name="Torres-Guzman J.C."/>
            <person name="Tam Y.Y.C."/>
            <person name="Aitchison J.D."/>
            <person name="Rachubinski R.A."/>
        </authorList>
    </citation>
    <scope>FUNCTION</scope>
    <scope>SUBCELLULAR LOCATION</scope>
</reference>
<reference key="4">
    <citation type="journal article" date="2003" name="Nature">
        <title>Global analysis of protein expression in yeast.</title>
        <authorList>
            <person name="Ghaemmaghami S."/>
            <person name="Huh W.-K."/>
            <person name="Bower K."/>
            <person name="Howson R.W."/>
            <person name="Belle A."/>
            <person name="Dephoure N."/>
            <person name="O'Shea E.K."/>
            <person name="Weissman J.S."/>
        </authorList>
    </citation>
    <scope>LEVEL OF PROTEIN EXPRESSION [LARGE SCALE ANALYSIS]</scope>
</reference>
<reference key="5">
    <citation type="journal article" date="2006" name="Proc. Natl. Acad. Sci. U.S.A.">
        <title>A global topology map of the Saccharomyces cerevisiae membrane proteome.</title>
        <authorList>
            <person name="Kim H."/>
            <person name="Melen K."/>
            <person name="Oesterberg M."/>
            <person name="von Heijne G."/>
        </authorList>
    </citation>
    <scope>TOPOLOGY [LARGE SCALE ANALYSIS]</scope>
    <source>
        <strain>ATCC 208353 / W303-1A</strain>
    </source>
</reference>
<reference key="6">
    <citation type="journal article" date="2008" name="Mol. Cell. Proteomics">
        <title>A multidimensional chromatography technology for in-depth phosphoproteome analysis.</title>
        <authorList>
            <person name="Albuquerque C.P."/>
            <person name="Smolka M.B."/>
            <person name="Payne S.H."/>
            <person name="Bafna V."/>
            <person name="Eng J."/>
            <person name="Zhou H."/>
        </authorList>
    </citation>
    <scope>IDENTIFICATION BY MASS SPECTROMETRY [LARGE SCALE ANALYSIS]</scope>
</reference>
<dbReference type="EMBL" id="U33050">
    <property type="protein sequence ID" value="AAB64918.1"/>
    <property type="molecule type" value="Genomic_DNA"/>
</dbReference>
<dbReference type="EMBL" id="BK006938">
    <property type="protein sequence ID" value="DAA12312.1"/>
    <property type="molecule type" value="Genomic_DNA"/>
</dbReference>
<dbReference type="PIR" id="S69646">
    <property type="entry name" value="S69646"/>
</dbReference>
<dbReference type="RefSeq" id="NP_010767.1">
    <property type="nucleotide sequence ID" value="NM_001180787.1"/>
</dbReference>
<dbReference type="BioGRID" id="32531">
    <property type="interactions" value="163"/>
</dbReference>
<dbReference type="DIP" id="DIP-5175N"/>
<dbReference type="FunCoup" id="Q03370">
    <property type="interactions" value="103"/>
</dbReference>
<dbReference type="IntAct" id="Q03370">
    <property type="interactions" value="42"/>
</dbReference>
<dbReference type="MINT" id="Q03370"/>
<dbReference type="STRING" id="4932.YDR479C"/>
<dbReference type="TCDB" id="3.A.20.1.5">
    <property type="family name" value="the peroxisomal protein importer (ppi) family"/>
</dbReference>
<dbReference type="iPTMnet" id="Q03370"/>
<dbReference type="PaxDb" id="4932-YDR479C"/>
<dbReference type="PeptideAtlas" id="Q03370"/>
<dbReference type="EnsemblFungi" id="YDR479C_mRNA">
    <property type="protein sequence ID" value="YDR479C"/>
    <property type="gene ID" value="YDR479C"/>
</dbReference>
<dbReference type="GeneID" id="852090"/>
<dbReference type="KEGG" id="sce:YDR479C"/>
<dbReference type="AGR" id="SGD:S000002887"/>
<dbReference type="SGD" id="S000002887">
    <property type="gene designation" value="PEX29"/>
</dbReference>
<dbReference type="VEuPathDB" id="FungiDB:YDR479C"/>
<dbReference type="eggNOG" id="ENOG502QQTF">
    <property type="taxonomic scope" value="Eukaryota"/>
</dbReference>
<dbReference type="HOGENOM" id="CLU_023118_1_0_1"/>
<dbReference type="InParanoid" id="Q03370"/>
<dbReference type="OMA" id="QNCMDDF"/>
<dbReference type="OrthoDB" id="74314at2759"/>
<dbReference type="BioCyc" id="YEAST:G3O-30005-MONOMER"/>
<dbReference type="BioGRID-ORCS" id="852090">
    <property type="hits" value="2 hits in 10 CRISPR screens"/>
</dbReference>
<dbReference type="PRO" id="PR:Q03370"/>
<dbReference type="Proteomes" id="UP000002311">
    <property type="component" value="Chromosome IV"/>
</dbReference>
<dbReference type="RNAct" id="Q03370">
    <property type="molecule type" value="protein"/>
</dbReference>
<dbReference type="GO" id="GO:0005783">
    <property type="term" value="C:endoplasmic reticulum"/>
    <property type="evidence" value="ECO:0000314"/>
    <property type="project" value="SGD"/>
</dbReference>
<dbReference type="GO" id="GO:0005778">
    <property type="term" value="C:peroxisomal membrane"/>
    <property type="evidence" value="ECO:0000314"/>
    <property type="project" value="SGD"/>
</dbReference>
<dbReference type="GO" id="GO:0005777">
    <property type="term" value="C:peroxisome"/>
    <property type="evidence" value="ECO:0000314"/>
    <property type="project" value="SGD"/>
</dbReference>
<dbReference type="GO" id="GO:0032581">
    <property type="term" value="P:ER-dependent peroxisome organization"/>
    <property type="evidence" value="ECO:0000316"/>
    <property type="project" value="SGD"/>
</dbReference>
<dbReference type="GO" id="GO:0007031">
    <property type="term" value="P:peroxisome organization"/>
    <property type="evidence" value="ECO:0000314"/>
    <property type="project" value="SGD"/>
</dbReference>
<dbReference type="InterPro" id="IPR052816">
    <property type="entry name" value="Peroxisomal_Membrane_PEX28-32"/>
</dbReference>
<dbReference type="InterPro" id="IPR010482">
    <property type="entry name" value="TECPR1-like_DysF"/>
</dbReference>
<dbReference type="PANTHER" id="PTHR28304">
    <property type="entry name" value="PEROXISOMAL MEMBRANE PROTEIN PEX29"/>
    <property type="match status" value="1"/>
</dbReference>
<dbReference type="PANTHER" id="PTHR28304:SF2">
    <property type="entry name" value="PEROXISOMAL MEMBRANE PROTEIN PEX29"/>
    <property type="match status" value="1"/>
</dbReference>
<dbReference type="Pfam" id="PF06398">
    <property type="entry name" value="Pex24p"/>
    <property type="match status" value="1"/>
</dbReference>
<comment type="function">
    <text evidence="3">Involved in the regulation of peroxisome number, size and distribution.</text>
</comment>
<comment type="interaction">
    <interactant intactId="EBI-36170">
        <id>Q03370</id>
    </interactant>
    <interactant intactId="EBI-31008">
        <id>Q06169</id>
        <label>PEX30</label>
    </interactant>
    <organismsDiffer>false</organismsDiffer>
    <experiments>2</experiments>
</comment>
<comment type="subcellular location">
    <subcellularLocation>
        <location evidence="3">Peroxisome membrane</location>
        <topology evidence="3">Multi-pass membrane protein</topology>
    </subcellularLocation>
</comment>
<comment type="miscellaneous">
    <text>Present with 5040 molecules/cell.</text>
</comment>
<comment type="similarity">
    <text evidence="4">Belongs to the PEX28-32 family. PEX29 subfamily.</text>
</comment>
<sequence>MDSVTNFFWNDTYNAGTPTRSTLKGKKVQNGIDGKSQAKKESISSGSRTSDPTRGSLPSSSGQPTSGGGFPSTSNIQKMMADTLVEKIIKMALPPSSKTAVDTIHHRMVAGKERPKLSVQITSRNFIQMNSRLGVPFMIMDELIKILNWTNPAYTVSIMFLYTLIILKPFQMLSSLPIFYLLFCVMVPQYLYIHKPNPTSYLDNNQTPAQGPPLRRPEVPKPVPELSQEFVLNLTDLQNHMLLYVKFYDFTLLILQKFAFFTNEAISSFYFIVLLIIATLNFLYMDKFIKLIPMRPVLILLGWGFFIASHPSNREYLLTKLNSEETRLKTLTISTNLESKILQHLKLIEAREHRLVMIFEIQKYLPEYKEWRPVGFSDDDYSLFSSLRIYQRRIEENSVKSLEEIEPPKDWEWEANSHWVLDLDPKEWVEDEFIQYVEIDSETKWVYDLNLDGQRGSYRRRMWTNSCVRKKLDSGISSNLGEEEVVNPLREETYRQGVHGVTKGSMSGGLTHSSDDDRADEESINGTIPNLNNIDADASYPSIEELTDTLNSTI</sequence>
<name>PEX29_YEAST</name>
<keyword id="KW-0472">Membrane</keyword>
<keyword id="KW-0576">Peroxisome</keyword>
<keyword id="KW-0962">Peroxisome biogenesis</keyword>
<keyword id="KW-1185">Reference proteome</keyword>
<keyword id="KW-0812">Transmembrane</keyword>
<keyword id="KW-1133">Transmembrane helix</keyword>
<organism>
    <name type="scientific">Saccharomyces cerevisiae (strain ATCC 204508 / S288c)</name>
    <name type="common">Baker's yeast</name>
    <dbReference type="NCBI Taxonomy" id="559292"/>
    <lineage>
        <taxon>Eukaryota</taxon>
        <taxon>Fungi</taxon>
        <taxon>Dikarya</taxon>
        <taxon>Ascomycota</taxon>
        <taxon>Saccharomycotina</taxon>
        <taxon>Saccharomycetes</taxon>
        <taxon>Saccharomycetales</taxon>
        <taxon>Saccharomycetaceae</taxon>
        <taxon>Saccharomyces</taxon>
    </lineage>
</organism>
<accession>Q03370</accession>
<accession>D6VTA2</accession>
<feature type="chain" id="PRO_0000252269" description="Peroxisomal membrane protein PEX29">
    <location>
        <begin position="1"/>
        <end position="554"/>
    </location>
</feature>
<feature type="topological domain" description="Cytoplasmic" evidence="1">
    <location>
        <begin position="1"/>
        <end position="145"/>
    </location>
</feature>
<feature type="transmembrane region" description="Helical" evidence="1">
    <location>
        <begin position="146"/>
        <end position="166"/>
    </location>
</feature>
<feature type="topological domain" description="Peroxisomal" evidence="1">
    <location>
        <begin position="167"/>
        <end position="172"/>
    </location>
</feature>
<feature type="transmembrane region" description="Helical" evidence="1">
    <location>
        <begin position="173"/>
        <end position="193"/>
    </location>
</feature>
<feature type="topological domain" description="Cytoplasmic" evidence="1">
    <location>
        <begin position="194"/>
        <end position="264"/>
    </location>
</feature>
<feature type="transmembrane region" description="Helical" evidence="1">
    <location>
        <begin position="265"/>
        <end position="285"/>
    </location>
</feature>
<feature type="topological domain" description="Peroxisomal" evidence="1">
    <location>
        <begin position="286"/>
        <end position="287"/>
    </location>
</feature>
<feature type="transmembrane region" description="Helical" evidence="1">
    <location>
        <begin position="288"/>
        <end position="308"/>
    </location>
</feature>
<feature type="topological domain" description="Cytoplasmic" evidence="1">
    <location>
        <begin position="309"/>
        <end position="554"/>
    </location>
</feature>
<feature type="region of interest" description="Disordered" evidence="2">
    <location>
        <begin position="11"/>
        <end position="73"/>
    </location>
</feature>
<feature type="region of interest" description="Disordered" evidence="2">
    <location>
        <begin position="500"/>
        <end position="532"/>
    </location>
</feature>
<feature type="compositionally biased region" description="Polar residues" evidence="2">
    <location>
        <begin position="11"/>
        <end position="22"/>
    </location>
</feature>
<feature type="compositionally biased region" description="Polar residues" evidence="2">
    <location>
        <begin position="43"/>
        <end position="53"/>
    </location>
</feature>
<feature type="compositionally biased region" description="Low complexity" evidence="2">
    <location>
        <begin position="55"/>
        <end position="64"/>
    </location>
</feature>
<proteinExistence type="evidence at protein level"/>
<evidence type="ECO:0000255" key="1"/>
<evidence type="ECO:0000256" key="2">
    <source>
        <dbReference type="SAM" id="MobiDB-lite"/>
    </source>
</evidence>
<evidence type="ECO:0000269" key="3">
    <source>
    </source>
</evidence>
<evidence type="ECO:0000305" key="4"/>
<gene>
    <name type="primary">PEX29</name>
    <name type="ordered locus">YDR479C</name>
</gene>